<evidence type="ECO:0000255" key="1"/>
<evidence type="ECO:0000305" key="2"/>
<comment type="subcellular location">
    <subcellularLocation>
        <location evidence="2">Membrane</location>
        <topology evidence="2">Single-pass membrane protein</topology>
    </subcellularLocation>
</comment>
<comment type="similarity">
    <text evidence="2">Belongs to the SMIM12 family.</text>
</comment>
<organism>
    <name type="scientific">Rattus norvegicus</name>
    <name type="common">Rat</name>
    <dbReference type="NCBI Taxonomy" id="10116"/>
    <lineage>
        <taxon>Eukaryota</taxon>
        <taxon>Metazoa</taxon>
        <taxon>Chordata</taxon>
        <taxon>Craniata</taxon>
        <taxon>Vertebrata</taxon>
        <taxon>Euteleostomi</taxon>
        <taxon>Mammalia</taxon>
        <taxon>Eutheria</taxon>
        <taxon>Euarchontoglires</taxon>
        <taxon>Glires</taxon>
        <taxon>Rodentia</taxon>
        <taxon>Myomorpha</taxon>
        <taxon>Muroidea</taxon>
        <taxon>Muridae</taxon>
        <taxon>Murinae</taxon>
        <taxon>Rattus</taxon>
    </lineage>
</organism>
<feature type="chain" id="PRO_0000414323" description="Small integral membrane protein 12">
    <location>
        <begin position="1"/>
        <end position="92"/>
    </location>
</feature>
<feature type="transmembrane region" description="Helical" evidence="1">
    <location>
        <begin position="15"/>
        <end position="34"/>
    </location>
</feature>
<proteinExistence type="inferred from homology"/>
<protein>
    <recommendedName>
        <fullName>Small integral membrane protein 12</fullName>
    </recommendedName>
</protein>
<sequence>MWPVLWTVVRTYAPYVTFPVAFVVGAVGYHLEWFIRGKDPQPVEEEKSILERREDRKLDEMLGKDHTQVVSLKDKLEFAPKAVLNRNRPEKN</sequence>
<dbReference type="EMBL" id="AABR03040720">
    <property type="status" value="NOT_ANNOTATED_CDS"/>
    <property type="molecule type" value="Genomic_DNA"/>
</dbReference>
<dbReference type="EMBL" id="CH473968">
    <property type="protein sequence ID" value="EDL80479.1"/>
    <property type="molecule type" value="Genomic_DNA"/>
</dbReference>
<dbReference type="RefSeq" id="NP_001263412.1">
    <property type="nucleotide sequence ID" value="NM_001276483.1"/>
</dbReference>
<dbReference type="RefSeq" id="XP_006238969.1">
    <property type="nucleotide sequence ID" value="XM_006238907.5"/>
</dbReference>
<dbReference type="SMR" id="D4ACP2"/>
<dbReference type="FunCoup" id="D4ACP2">
    <property type="interactions" value="1267"/>
</dbReference>
<dbReference type="STRING" id="10116.ENSRNOP00000019224"/>
<dbReference type="PaxDb" id="10116-ENSRNOP00000019224"/>
<dbReference type="PeptideAtlas" id="D4ACP2"/>
<dbReference type="Ensembl" id="ENSRNOT00000019224.6">
    <property type="protein sequence ID" value="ENSRNOP00000019224.2"/>
    <property type="gene ID" value="ENSRNOG00000014352.6"/>
</dbReference>
<dbReference type="Ensembl" id="ENSRNOT00000094142.1">
    <property type="protein sequence ID" value="ENSRNOP00000096325.1"/>
    <property type="gene ID" value="ENSRNOG00000014352.6"/>
</dbReference>
<dbReference type="Ensembl" id="ENSRNOT00000101473.1">
    <property type="protein sequence ID" value="ENSRNOP00000084740.1"/>
    <property type="gene ID" value="ENSRNOG00000014352.6"/>
</dbReference>
<dbReference type="Ensembl" id="ENSRNOT00000102125.1">
    <property type="protein sequence ID" value="ENSRNOP00000087108.1"/>
    <property type="gene ID" value="ENSRNOG00000014352.6"/>
</dbReference>
<dbReference type="Ensembl" id="ENSRNOT00000102383.1">
    <property type="protein sequence ID" value="ENSRNOP00000081715.1"/>
    <property type="gene ID" value="ENSRNOG00000014352.6"/>
</dbReference>
<dbReference type="GeneID" id="685634"/>
<dbReference type="KEGG" id="rno:685634"/>
<dbReference type="UCSC" id="RGD:1591379">
    <property type="organism name" value="rat"/>
</dbReference>
<dbReference type="AGR" id="RGD:1591379"/>
<dbReference type="CTD" id="113444"/>
<dbReference type="RGD" id="1591379">
    <property type="gene designation" value="Smim12"/>
</dbReference>
<dbReference type="eggNOG" id="ENOG502S2AD">
    <property type="taxonomic scope" value="Eukaryota"/>
</dbReference>
<dbReference type="GeneTree" id="ENSGT00390000009435"/>
<dbReference type="HOGENOM" id="CLU_160787_0_0_1"/>
<dbReference type="InParanoid" id="D4ACP2"/>
<dbReference type="OMA" id="YHLEWFL"/>
<dbReference type="OrthoDB" id="10052506at2759"/>
<dbReference type="PhylomeDB" id="D4ACP2"/>
<dbReference type="TreeFam" id="TF328614"/>
<dbReference type="PRO" id="PR:D4ACP2"/>
<dbReference type="Proteomes" id="UP000002494">
    <property type="component" value="Chromosome 5"/>
</dbReference>
<dbReference type="Proteomes" id="UP000234681">
    <property type="component" value="Chromosome 5"/>
</dbReference>
<dbReference type="Bgee" id="ENSRNOG00000014352">
    <property type="expression patterns" value="Expressed in heart and 19 other cell types or tissues"/>
</dbReference>
<dbReference type="GO" id="GO:0016020">
    <property type="term" value="C:membrane"/>
    <property type="evidence" value="ECO:0007669"/>
    <property type="project" value="UniProtKB-SubCell"/>
</dbReference>
<dbReference type="InterPro" id="IPR031933">
    <property type="entry name" value="UPF0767"/>
</dbReference>
<dbReference type="PANTHER" id="PTHR28599">
    <property type="entry name" value="SMALL INTEGRAL MEMBRANE PROTEIN 12"/>
    <property type="match status" value="1"/>
</dbReference>
<dbReference type="PANTHER" id="PTHR28599:SF1">
    <property type="entry name" value="SMALL INTEGRAL MEMBRANE PROTEIN 12"/>
    <property type="match status" value="1"/>
</dbReference>
<dbReference type="Pfam" id="PF15990">
    <property type="entry name" value="UPF0767"/>
    <property type="match status" value="1"/>
</dbReference>
<keyword id="KW-0472">Membrane</keyword>
<keyword id="KW-1185">Reference proteome</keyword>
<keyword id="KW-0812">Transmembrane</keyword>
<keyword id="KW-1133">Transmembrane helix</keyword>
<gene>
    <name type="primary">Smim12</name>
</gene>
<accession>D4ACP2</accession>
<reference key="1">
    <citation type="journal article" date="2004" name="Nature">
        <title>Genome sequence of the Brown Norway rat yields insights into mammalian evolution.</title>
        <authorList>
            <person name="Gibbs R.A."/>
            <person name="Weinstock G.M."/>
            <person name="Metzker M.L."/>
            <person name="Muzny D.M."/>
            <person name="Sodergren E.J."/>
            <person name="Scherer S."/>
            <person name="Scott G."/>
            <person name="Steffen D."/>
            <person name="Worley K.C."/>
            <person name="Burch P.E."/>
            <person name="Okwuonu G."/>
            <person name="Hines S."/>
            <person name="Lewis L."/>
            <person name="Deramo C."/>
            <person name="Delgado O."/>
            <person name="Dugan-Rocha S."/>
            <person name="Miner G."/>
            <person name="Morgan M."/>
            <person name="Hawes A."/>
            <person name="Gill R."/>
            <person name="Holt R.A."/>
            <person name="Adams M.D."/>
            <person name="Amanatides P.G."/>
            <person name="Baden-Tillson H."/>
            <person name="Barnstead M."/>
            <person name="Chin S."/>
            <person name="Evans C.A."/>
            <person name="Ferriera S."/>
            <person name="Fosler C."/>
            <person name="Glodek A."/>
            <person name="Gu Z."/>
            <person name="Jennings D."/>
            <person name="Kraft C.L."/>
            <person name="Nguyen T."/>
            <person name="Pfannkoch C.M."/>
            <person name="Sitter C."/>
            <person name="Sutton G.G."/>
            <person name="Venter J.C."/>
            <person name="Woodage T."/>
            <person name="Smith D."/>
            <person name="Lee H.-M."/>
            <person name="Gustafson E."/>
            <person name="Cahill P."/>
            <person name="Kana A."/>
            <person name="Doucette-Stamm L."/>
            <person name="Weinstock K."/>
            <person name="Fechtel K."/>
            <person name="Weiss R.B."/>
            <person name="Dunn D.M."/>
            <person name="Green E.D."/>
            <person name="Blakesley R.W."/>
            <person name="Bouffard G.G."/>
            <person name="De Jong P.J."/>
            <person name="Osoegawa K."/>
            <person name="Zhu B."/>
            <person name="Marra M."/>
            <person name="Schein J."/>
            <person name="Bosdet I."/>
            <person name="Fjell C."/>
            <person name="Jones S."/>
            <person name="Krzywinski M."/>
            <person name="Mathewson C."/>
            <person name="Siddiqui A."/>
            <person name="Wye N."/>
            <person name="McPherson J."/>
            <person name="Zhao S."/>
            <person name="Fraser C.M."/>
            <person name="Shetty J."/>
            <person name="Shatsman S."/>
            <person name="Geer K."/>
            <person name="Chen Y."/>
            <person name="Abramzon S."/>
            <person name="Nierman W.C."/>
            <person name="Havlak P.H."/>
            <person name="Chen R."/>
            <person name="Durbin K.J."/>
            <person name="Egan A."/>
            <person name="Ren Y."/>
            <person name="Song X.-Z."/>
            <person name="Li B."/>
            <person name="Liu Y."/>
            <person name="Qin X."/>
            <person name="Cawley S."/>
            <person name="Cooney A.J."/>
            <person name="D'Souza L.M."/>
            <person name="Martin K."/>
            <person name="Wu J.Q."/>
            <person name="Gonzalez-Garay M.L."/>
            <person name="Jackson A.R."/>
            <person name="Kalafus K.J."/>
            <person name="McLeod M.P."/>
            <person name="Milosavljevic A."/>
            <person name="Virk D."/>
            <person name="Volkov A."/>
            <person name="Wheeler D.A."/>
            <person name="Zhang Z."/>
            <person name="Bailey J.A."/>
            <person name="Eichler E.E."/>
            <person name="Tuzun E."/>
            <person name="Birney E."/>
            <person name="Mongin E."/>
            <person name="Ureta-Vidal A."/>
            <person name="Woodwark C."/>
            <person name="Zdobnov E."/>
            <person name="Bork P."/>
            <person name="Suyama M."/>
            <person name="Torrents D."/>
            <person name="Alexandersson M."/>
            <person name="Trask B.J."/>
            <person name="Young J.M."/>
            <person name="Huang H."/>
            <person name="Wang H."/>
            <person name="Xing H."/>
            <person name="Daniels S."/>
            <person name="Gietzen D."/>
            <person name="Schmidt J."/>
            <person name="Stevens K."/>
            <person name="Vitt U."/>
            <person name="Wingrove J."/>
            <person name="Camara F."/>
            <person name="Mar Alba M."/>
            <person name="Abril J.F."/>
            <person name="Guigo R."/>
            <person name="Smit A."/>
            <person name="Dubchak I."/>
            <person name="Rubin E.M."/>
            <person name="Couronne O."/>
            <person name="Poliakov A."/>
            <person name="Huebner N."/>
            <person name="Ganten D."/>
            <person name="Goesele C."/>
            <person name="Hummel O."/>
            <person name="Kreitler T."/>
            <person name="Lee Y.-A."/>
            <person name="Monti J."/>
            <person name="Schulz H."/>
            <person name="Zimdahl H."/>
            <person name="Himmelbauer H."/>
            <person name="Lehrach H."/>
            <person name="Jacob H.J."/>
            <person name="Bromberg S."/>
            <person name="Gullings-Handley J."/>
            <person name="Jensen-Seaman M.I."/>
            <person name="Kwitek A.E."/>
            <person name="Lazar J."/>
            <person name="Pasko D."/>
            <person name="Tonellato P.J."/>
            <person name="Twigger S."/>
            <person name="Ponting C.P."/>
            <person name="Duarte J.M."/>
            <person name="Rice S."/>
            <person name="Goodstadt L."/>
            <person name="Beatson S.A."/>
            <person name="Emes R.D."/>
            <person name="Winter E.E."/>
            <person name="Webber C."/>
            <person name="Brandt P."/>
            <person name="Nyakatura G."/>
            <person name="Adetobi M."/>
            <person name="Chiaromonte F."/>
            <person name="Elnitski L."/>
            <person name="Eswara P."/>
            <person name="Hardison R.C."/>
            <person name="Hou M."/>
            <person name="Kolbe D."/>
            <person name="Makova K."/>
            <person name="Miller W."/>
            <person name="Nekrutenko A."/>
            <person name="Riemer C."/>
            <person name="Schwartz S."/>
            <person name="Taylor J."/>
            <person name="Yang S."/>
            <person name="Zhang Y."/>
            <person name="Lindpaintner K."/>
            <person name="Andrews T.D."/>
            <person name="Caccamo M."/>
            <person name="Clamp M."/>
            <person name="Clarke L."/>
            <person name="Curwen V."/>
            <person name="Durbin R.M."/>
            <person name="Eyras E."/>
            <person name="Searle S.M."/>
            <person name="Cooper G.M."/>
            <person name="Batzoglou S."/>
            <person name="Brudno M."/>
            <person name="Sidow A."/>
            <person name="Stone E.A."/>
            <person name="Payseur B.A."/>
            <person name="Bourque G."/>
            <person name="Lopez-Otin C."/>
            <person name="Puente X.S."/>
            <person name="Chakrabarti K."/>
            <person name="Chatterji S."/>
            <person name="Dewey C."/>
            <person name="Pachter L."/>
            <person name="Bray N."/>
            <person name="Yap V.B."/>
            <person name="Caspi A."/>
            <person name="Tesler G."/>
            <person name="Pevzner P.A."/>
            <person name="Haussler D."/>
            <person name="Roskin K.M."/>
            <person name="Baertsch R."/>
            <person name="Clawson H."/>
            <person name="Furey T.S."/>
            <person name="Hinrichs A.S."/>
            <person name="Karolchik D."/>
            <person name="Kent W.J."/>
            <person name="Rosenbloom K.R."/>
            <person name="Trumbower H."/>
            <person name="Weirauch M."/>
            <person name="Cooper D.N."/>
            <person name="Stenson P.D."/>
            <person name="Ma B."/>
            <person name="Brent M."/>
            <person name="Arumugam M."/>
            <person name="Shteynberg D."/>
            <person name="Copley R.R."/>
            <person name="Taylor M.S."/>
            <person name="Riethman H."/>
            <person name="Mudunuri U."/>
            <person name="Peterson J."/>
            <person name="Guyer M."/>
            <person name="Felsenfeld A."/>
            <person name="Old S."/>
            <person name="Mockrin S."/>
            <person name="Collins F.S."/>
        </authorList>
    </citation>
    <scope>NUCLEOTIDE SEQUENCE [LARGE SCALE GENOMIC DNA]</scope>
    <source>
        <strain>Brown Norway</strain>
    </source>
</reference>
<reference key="2">
    <citation type="submission" date="2005-07" db="EMBL/GenBank/DDBJ databases">
        <authorList>
            <person name="Mural R.J."/>
            <person name="Adams M.D."/>
            <person name="Myers E.W."/>
            <person name="Smith H.O."/>
            <person name="Venter J.C."/>
        </authorList>
    </citation>
    <scope>NUCLEOTIDE SEQUENCE [LARGE SCALE GENOMIC DNA]</scope>
    <source>
        <strain>Brown Norway</strain>
    </source>
</reference>
<name>SIM12_RAT</name>